<accession>Q4L7G9</accession>
<organism>
    <name type="scientific">Staphylococcus haemolyticus (strain JCSC1435)</name>
    <dbReference type="NCBI Taxonomy" id="279808"/>
    <lineage>
        <taxon>Bacteria</taxon>
        <taxon>Bacillati</taxon>
        <taxon>Bacillota</taxon>
        <taxon>Bacilli</taxon>
        <taxon>Bacillales</taxon>
        <taxon>Staphylococcaceae</taxon>
        <taxon>Staphylococcus</taxon>
    </lineage>
</organism>
<protein>
    <recommendedName>
        <fullName evidence="1">Glutamate-1-semialdehyde 2,1-aminomutase 1</fullName>
        <shortName evidence="1">GSA 1</shortName>
        <ecNumber evidence="1">5.4.3.8</ecNumber>
    </recommendedName>
    <alternativeName>
        <fullName evidence="1">Glutamate-1-semialdehyde aminotransferase 1</fullName>
        <shortName evidence="1">GSA-AT 1</shortName>
    </alternativeName>
</protein>
<sequence length="429" mass="47102">MKFTESERLQQLSNEYILGGVNSPSRSYKAVGGGAPVVMREGHGAYLYDVDGNKFIDYLQAYGPIITGHAHPHITKAIQDQAAKGVLYGTPTELEIEFSKKLREAIPSLEKIRFVNSGTEAVMTTIRVARAYTKRNKIIKFAGSYHGHSDLVLVAAGSGPSQLGSPDSAGVPESVAKEVITVPFNDIESYKEAMKHWGDEVAAVLVEPIVGNFGMVEPQPGFLEKVNEITHDYGALVIYDEVITAFRFHYGAAQDLLNVYPDLTAFGKIIGGGLPIGGYGGRQDIMEHVAPLGPAYQAGTMAGNPLSMRAGIALLEVLEQNGVYERLDQLGKRLEDGLLELIDKHNITATINRVYGSLTLYFTDEKITHYEQVENSNGEAFAKFFKLMLNQGINLAPSKFEAWFLTTEHTEEDIDETLKAVDYAFSQMK</sequence>
<name>GSA1_STAHJ</name>
<feature type="chain" id="PRO_0000382383" description="Glutamate-1-semialdehyde 2,1-aminomutase 1">
    <location>
        <begin position="1"/>
        <end position="429"/>
    </location>
</feature>
<feature type="modified residue" description="N6-(pyridoxal phosphate)lysine" evidence="1">
    <location>
        <position position="268"/>
    </location>
</feature>
<dbReference type="EC" id="5.4.3.8" evidence="1"/>
<dbReference type="EMBL" id="AP006716">
    <property type="protein sequence ID" value="BAE04406.1"/>
    <property type="status" value="ALT_INIT"/>
    <property type="molecule type" value="Genomic_DNA"/>
</dbReference>
<dbReference type="RefSeq" id="WP_011275399.1">
    <property type="nucleotide sequence ID" value="NC_007168.1"/>
</dbReference>
<dbReference type="SMR" id="Q4L7G9"/>
<dbReference type="KEGG" id="sha:SH1097"/>
<dbReference type="eggNOG" id="COG0001">
    <property type="taxonomic scope" value="Bacteria"/>
</dbReference>
<dbReference type="HOGENOM" id="CLU_016922_1_5_9"/>
<dbReference type="OrthoDB" id="9807885at2"/>
<dbReference type="UniPathway" id="UPA00251">
    <property type="reaction ID" value="UER00317"/>
</dbReference>
<dbReference type="Proteomes" id="UP000000543">
    <property type="component" value="Chromosome"/>
</dbReference>
<dbReference type="GO" id="GO:0005737">
    <property type="term" value="C:cytoplasm"/>
    <property type="evidence" value="ECO:0007669"/>
    <property type="project" value="UniProtKB-SubCell"/>
</dbReference>
<dbReference type="GO" id="GO:0042286">
    <property type="term" value="F:glutamate-1-semialdehyde 2,1-aminomutase activity"/>
    <property type="evidence" value="ECO:0007669"/>
    <property type="project" value="UniProtKB-UniRule"/>
</dbReference>
<dbReference type="GO" id="GO:0030170">
    <property type="term" value="F:pyridoxal phosphate binding"/>
    <property type="evidence" value="ECO:0007669"/>
    <property type="project" value="InterPro"/>
</dbReference>
<dbReference type="GO" id="GO:0008483">
    <property type="term" value="F:transaminase activity"/>
    <property type="evidence" value="ECO:0007669"/>
    <property type="project" value="InterPro"/>
</dbReference>
<dbReference type="GO" id="GO:0006782">
    <property type="term" value="P:protoporphyrinogen IX biosynthetic process"/>
    <property type="evidence" value="ECO:0007669"/>
    <property type="project" value="UniProtKB-UniRule"/>
</dbReference>
<dbReference type="CDD" id="cd00610">
    <property type="entry name" value="OAT_like"/>
    <property type="match status" value="1"/>
</dbReference>
<dbReference type="FunFam" id="3.40.640.10:FF:000021">
    <property type="entry name" value="Glutamate-1-semialdehyde 2,1-aminomutase"/>
    <property type="match status" value="1"/>
</dbReference>
<dbReference type="Gene3D" id="3.90.1150.10">
    <property type="entry name" value="Aspartate Aminotransferase, domain 1"/>
    <property type="match status" value="1"/>
</dbReference>
<dbReference type="Gene3D" id="3.40.640.10">
    <property type="entry name" value="Type I PLP-dependent aspartate aminotransferase-like (Major domain)"/>
    <property type="match status" value="1"/>
</dbReference>
<dbReference type="HAMAP" id="MF_00375">
    <property type="entry name" value="HemL_aminotrans_3"/>
    <property type="match status" value="1"/>
</dbReference>
<dbReference type="InterPro" id="IPR004639">
    <property type="entry name" value="4pyrrol_synth_GluAld_NH2Trfase"/>
</dbReference>
<dbReference type="InterPro" id="IPR005814">
    <property type="entry name" value="Aminotrans_3"/>
</dbReference>
<dbReference type="InterPro" id="IPR049704">
    <property type="entry name" value="Aminotrans_3_PPA_site"/>
</dbReference>
<dbReference type="InterPro" id="IPR015424">
    <property type="entry name" value="PyrdxlP-dep_Trfase"/>
</dbReference>
<dbReference type="InterPro" id="IPR015421">
    <property type="entry name" value="PyrdxlP-dep_Trfase_major"/>
</dbReference>
<dbReference type="InterPro" id="IPR015422">
    <property type="entry name" value="PyrdxlP-dep_Trfase_small"/>
</dbReference>
<dbReference type="NCBIfam" id="TIGR00713">
    <property type="entry name" value="hemL"/>
    <property type="match status" value="1"/>
</dbReference>
<dbReference type="NCBIfam" id="NF000818">
    <property type="entry name" value="PRK00062.1"/>
    <property type="match status" value="1"/>
</dbReference>
<dbReference type="NCBIfam" id="NF009055">
    <property type="entry name" value="PRK12389.1"/>
    <property type="match status" value="1"/>
</dbReference>
<dbReference type="PANTHER" id="PTHR43713">
    <property type="entry name" value="GLUTAMATE-1-SEMIALDEHYDE 2,1-AMINOMUTASE"/>
    <property type="match status" value="1"/>
</dbReference>
<dbReference type="PANTHER" id="PTHR43713:SF1">
    <property type="entry name" value="GLUTAMATE-1-SEMIALDEHYDE 2,1-AMINOMUTASE 2"/>
    <property type="match status" value="1"/>
</dbReference>
<dbReference type="Pfam" id="PF00202">
    <property type="entry name" value="Aminotran_3"/>
    <property type="match status" value="1"/>
</dbReference>
<dbReference type="SUPFAM" id="SSF53383">
    <property type="entry name" value="PLP-dependent transferases"/>
    <property type="match status" value="1"/>
</dbReference>
<dbReference type="PROSITE" id="PS00600">
    <property type="entry name" value="AA_TRANSFER_CLASS_3"/>
    <property type="match status" value="1"/>
</dbReference>
<keyword id="KW-0963">Cytoplasm</keyword>
<keyword id="KW-0413">Isomerase</keyword>
<keyword id="KW-0627">Porphyrin biosynthesis</keyword>
<keyword id="KW-0663">Pyridoxal phosphate</keyword>
<evidence type="ECO:0000255" key="1">
    <source>
        <dbReference type="HAMAP-Rule" id="MF_00375"/>
    </source>
</evidence>
<evidence type="ECO:0000305" key="2"/>
<reference key="1">
    <citation type="journal article" date="2005" name="J. Bacteriol.">
        <title>Whole-genome sequencing of Staphylococcus haemolyticus uncovers the extreme plasticity of its genome and the evolution of human-colonizing staphylococcal species.</title>
        <authorList>
            <person name="Takeuchi F."/>
            <person name="Watanabe S."/>
            <person name="Baba T."/>
            <person name="Yuzawa H."/>
            <person name="Ito T."/>
            <person name="Morimoto Y."/>
            <person name="Kuroda M."/>
            <person name="Cui L."/>
            <person name="Takahashi M."/>
            <person name="Ankai A."/>
            <person name="Baba S."/>
            <person name="Fukui S."/>
            <person name="Lee J.C."/>
            <person name="Hiramatsu K."/>
        </authorList>
    </citation>
    <scope>NUCLEOTIDE SEQUENCE [LARGE SCALE GENOMIC DNA]</scope>
    <source>
        <strain>JCSC1435</strain>
    </source>
</reference>
<proteinExistence type="inferred from homology"/>
<comment type="catalytic activity">
    <reaction evidence="1">
        <text>(S)-4-amino-5-oxopentanoate = 5-aminolevulinate</text>
        <dbReference type="Rhea" id="RHEA:14265"/>
        <dbReference type="ChEBI" id="CHEBI:57501"/>
        <dbReference type="ChEBI" id="CHEBI:356416"/>
        <dbReference type="EC" id="5.4.3.8"/>
    </reaction>
</comment>
<comment type="cofactor">
    <cofactor evidence="1">
        <name>pyridoxal 5'-phosphate</name>
        <dbReference type="ChEBI" id="CHEBI:597326"/>
    </cofactor>
</comment>
<comment type="pathway">
    <text evidence="1">Porphyrin-containing compound metabolism; protoporphyrin-IX biosynthesis; 5-aminolevulinate from L-glutamyl-tRNA(Glu): step 2/2.</text>
</comment>
<comment type="subunit">
    <text evidence="1">Homodimer.</text>
</comment>
<comment type="subcellular location">
    <subcellularLocation>
        <location evidence="1">Cytoplasm</location>
    </subcellularLocation>
</comment>
<comment type="similarity">
    <text evidence="1">Belongs to the class-III pyridoxal-phosphate-dependent aminotransferase family. HemL subfamily.</text>
</comment>
<comment type="sequence caution" evidence="2">
    <conflict type="erroneous initiation">
        <sequence resource="EMBL-CDS" id="BAE04406"/>
    </conflict>
</comment>
<gene>
    <name evidence="1" type="primary">hemL1</name>
    <name type="ordered locus">SH1097</name>
</gene>